<organism>
    <name type="scientific">Abies grandis</name>
    <name type="common">Grand fir</name>
    <name type="synonym">Pinus grandis</name>
    <dbReference type="NCBI Taxonomy" id="46611"/>
    <lineage>
        <taxon>Eukaryota</taxon>
        <taxon>Viridiplantae</taxon>
        <taxon>Streptophyta</taxon>
        <taxon>Embryophyta</taxon>
        <taxon>Tracheophyta</taxon>
        <taxon>Spermatophyta</taxon>
        <taxon>Pinopsida</taxon>
        <taxon>Pinidae</taxon>
        <taxon>Conifers I</taxon>
        <taxon>Pinales</taxon>
        <taxon>Pinaceae</taxon>
        <taxon>Abies</taxon>
    </lineage>
</organism>
<dbReference type="EC" id="4.2.3.113"/>
<dbReference type="EMBL" id="AF139206">
    <property type="protein sequence ID" value="AAF61454.1"/>
    <property type="molecule type" value="mRNA"/>
</dbReference>
<dbReference type="SMR" id="Q9M7D0"/>
<dbReference type="KEGG" id="ag:AAF61454"/>
<dbReference type="BioCyc" id="MetaCyc:AG9-MONOMER"/>
<dbReference type="BRENDA" id="4.2.3.113">
    <property type="organism ID" value="2"/>
</dbReference>
<dbReference type="BRENDA" id="4.2.3.119">
    <property type="organism ID" value="2"/>
</dbReference>
<dbReference type="BRENDA" id="4.2.3.120">
    <property type="organism ID" value="2"/>
</dbReference>
<dbReference type="BRENDA" id="4.2.3.16">
    <property type="organism ID" value="2"/>
</dbReference>
<dbReference type="UniPathway" id="UPA00924"/>
<dbReference type="GO" id="GO:0009507">
    <property type="term" value="C:chloroplast"/>
    <property type="evidence" value="ECO:0007669"/>
    <property type="project" value="UniProtKB-SubCell"/>
</dbReference>
<dbReference type="GO" id="GO:0000287">
    <property type="term" value="F:magnesium ion binding"/>
    <property type="evidence" value="ECO:0007669"/>
    <property type="project" value="InterPro"/>
</dbReference>
<dbReference type="GO" id="GO:0010333">
    <property type="term" value="F:terpene synthase activity"/>
    <property type="evidence" value="ECO:0007669"/>
    <property type="project" value="InterPro"/>
</dbReference>
<dbReference type="GO" id="GO:0016102">
    <property type="term" value="P:diterpenoid biosynthetic process"/>
    <property type="evidence" value="ECO:0007669"/>
    <property type="project" value="InterPro"/>
</dbReference>
<dbReference type="CDD" id="cd00684">
    <property type="entry name" value="Terpene_cyclase_plant_C1"/>
    <property type="match status" value="1"/>
</dbReference>
<dbReference type="FunFam" id="1.50.10.130:FF:000004">
    <property type="entry name" value="Carene synthase, chloroplastic"/>
    <property type="match status" value="1"/>
</dbReference>
<dbReference type="FunFam" id="1.10.600.10:FF:000005">
    <property type="entry name" value="Ent-kaur-16-ene synthase, chloroplastic"/>
    <property type="match status" value="1"/>
</dbReference>
<dbReference type="Gene3D" id="1.10.600.10">
    <property type="entry name" value="Farnesyl Diphosphate Synthase"/>
    <property type="match status" value="1"/>
</dbReference>
<dbReference type="Gene3D" id="1.50.10.130">
    <property type="entry name" value="Terpene synthase, N-terminal domain"/>
    <property type="match status" value="1"/>
</dbReference>
<dbReference type="InterPro" id="IPR008949">
    <property type="entry name" value="Isoprenoid_synthase_dom_sf"/>
</dbReference>
<dbReference type="InterPro" id="IPR034741">
    <property type="entry name" value="Terpene_cyclase-like_1_C"/>
</dbReference>
<dbReference type="InterPro" id="IPR044814">
    <property type="entry name" value="Terpene_cyclase_plant_C1"/>
</dbReference>
<dbReference type="InterPro" id="IPR001906">
    <property type="entry name" value="Terpene_synth_N"/>
</dbReference>
<dbReference type="InterPro" id="IPR036965">
    <property type="entry name" value="Terpene_synth_N_sf"/>
</dbReference>
<dbReference type="InterPro" id="IPR050148">
    <property type="entry name" value="Terpene_synthase-like"/>
</dbReference>
<dbReference type="InterPro" id="IPR005630">
    <property type="entry name" value="Terpene_synthase_metal-bd"/>
</dbReference>
<dbReference type="InterPro" id="IPR008930">
    <property type="entry name" value="Terpenoid_cyclase/PrenylTrfase"/>
</dbReference>
<dbReference type="PANTHER" id="PTHR31225">
    <property type="entry name" value="OS04G0344100 PROTEIN-RELATED"/>
    <property type="match status" value="1"/>
</dbReference>
<dbReference type="PANTHER" id="PTHR31225:SF137">
    <property type="entry name" value="TERPENE SYNTHASE 11-RELATED"/>
    <property type="match status" value="1"/>
</dbReference>
<dbReference type="Pfam" id="PF01397">
    <property type="entry name" value="Terpene_synth"/>
    <property type="match status" value="1"/>
</dbReference>
<dbReference type="Pfam" id="PF03936">
    <property type="entry name" value="Terpene_synth_C"/>
    <property type="match status" value="1"/>
</dbReference>
<dbReference type="SFLD" id="SFLDS00005">
    <property type="entry name" value="Isoprenoid_Synthase_Type_I"/>
    <property type="match status" value="1"/>
</dbReference>
<dbReference type="SFLD" id="SFLDG01019">
    <property type="entry name" value="Terpene_Cyclase_Like_1_C_Termi"/>
    <property type="match status" value="1"/>
</dbReference>
<dbReference type="SFLD" id="SFLDG01014">
    <property type="entry name" value="Terpene_Cyclase_Like_1_N-term"/>
    <property type="match status" value="1"/>
</dbReference>
<dbReference type="SUPFAM" id="SSF48239">
    <property type="entry name" value="Terpenoid cyclases/Protein prenyltransferases"/>
    <property type="match status" value="1"/>
</dbReference>
<dbReference type="SUPFAM" id="SSF48576">
    <property type="entry name" value="Terpenoid synthases"/>
    <property type="match status" value="1"/>
</dbReference>
<accession>Q9M7D0</accession>
<protein>
    <recommendedName>
        <fullName>Terpinolene synthase, chloroplastic</fullName>
        <ecNumber>4.2.3.113</ecNumber>
    </recommendedName>
    <alternativeName>
        <fullName>Aggteo</fullName>
    </alternativeName>
</protein>
<gene>
    <name type="primary">ag9</name>
    <name type="synonym">agc9</name>
</gene>
<sequence>MALVSILPLSSKSVLHKSWIVSTYEHKAISRTIPNLGLRGRGKSVTHSLRMSLSTAVSDDHGVQRRIVEFHSNLWDDDFIQSLSTPYGAPSYRERADRLIVEVKGIFTSISAEDGELITPLNDLIQRLLMVDNVERLGIDRHFKNEIKAALDYVYSYWNEKGIGSGSDSGVADLNSTALGFRILRLHGYSVSSDVLEHFKEEKEKGQFVCSAIQTEEEIKSVLNLFRASLIAFPGEKVMEEAEIFSKIYLKEALQNIAVSSLSREIEYVLEDGWQTNMPRLETRNYIDVLGENDRDETLYMNMEKLLEIAKLEFNIFHSLQQRELKDLSRWWKDSGFSHLTFSRHRHVEFYALASCIETDRKHSGFRLGFAKMCHLITVLDDIYDTFGTMEELELFTAAFKRWDPSATDLLPEYMKGLYMVVYETVNEIAREADKSQGRETLNDARRAWEAYLDSYMKEAEWISSGYLPTFEEYMETSKVSFGYRIFALQPILTMDVPLTHHILQEIDFPLRFNDLICSILRLKNDTRCYKADRARGEEASCISCYMKENPGSTEEDAINHINAMVNNLIKEVNWELLRQDGTAHIACKKHAFDILKGSLHGYKYRDGFSVANKETKNWVRRTVLESVPL</sequence>
<feature type="transit peptide" description="Chloroplast" evidence="2">
    <location>
        <begin position="1"/>
        <end position="52"/>
    </location>
</feature>
<feature type="chain" id="PRO_0000033631" description="Terpinolene synthase, chloroplastic">
    <location>
        <begin position="53"/>
        <end position="630"/>
    </location>
</feature>
<feature type="short sequence motif" description="DDXXD motif">
    <location>
        <begin position="381"/>
        <end position="385"/>
    </location>
</feature>
<feature type="binding site" evidence="1">
    <location>
        <position position="381"/>
    </location>
    <ligand>
        <name>Mg(2+)</name>
        <dbReference type="ChEBI" id="CHEBI:18420"/>
        <label>1</label>
    </ligand>
</feature>
<feature type="binding site" evidence="1">
    <location>
        <position position="381"/>
    </location>
    <ligand>
        <name>Mg(2+)</name>
        <dbReference type="ChEBI" id="CHEBI:18420"/>
        <label>2</label>
    </ligand>
</feature>
<feature type="binding site" evidence="1">
    <location>
        <position position="385"/>
    </location>
    <ligand>
        <name>Mg(2+)</name>
        <dbReference type="ChEBI" id="CHEBI:18420"/>
        <label>1</label>
    </ligand>
</feature>
<feature type="binding site" evidence="1">
    <location>
        <position position="385"/>
    </location>
    <ligand>
        <name>Mg(2+)</name>
        <dbReference type="ChEBI" id="CHEBI:18420"/>
        <label>2</label>
    </ligand>
</feature>
<feature type="binding site" evidence="1">
    <location>
        <position position="525"/>
    </location>
    <ligand>
        <name>Mg(2+)</name>
        <dbReference type="ChEBI" id="CHEBI:18420"/>
        <label>3</label>
    </ligand>
</feature>
<feature type="binding site" evidence="1">
    <location>
        <position position="533"/>
    </location>
    <ligand>
        <name>Mg(2+)</name>
        <dbReference type="ChEBI" id="CHEBI:18420"/>
        <label>3</label>
    </ligand>
</feature>
<proteinExistence type="evidence at protein level"/>
<comment type="function">
    <text evidence="3 4 5">Involved in defensive oleoresin formation in conifers in response to insect attack or other injury. Involved in monoterpene (C10) olefins biosynthesis.</text>
</comment>
<comment type="catalytic activity">
    <reaction evidence="3">
        <text>(2E)-geranyl diphosphate = terpinolene + diphosphate</text>
        <dbReference type="Rhea" id="RHEA:25500"/>
        <dbReference type="ChEBI" id="CHEBI:9457"/>
        <dbReference type="ChEBI" id="CHEBI:33019"/>
        <dbReference type="ChEBI" id="CHEBI:58057"/>
        <dbReference type="EC" id="4.2.3.113"/>
    </reaction>
</comment>
<comment type="cofactor">
    <cofactor evidence="1">
        <name>Mg(2+)</name>
        <dbReference type="ChEBI" id="CHEBI:18420"/>
    </cofactor>
    <cofactor evidence="1">
        <name>Mn(2+)</name>
        <dbReference type="ChEBI" id="CHEBI:29035"/>
    </cofactor>
    <text evidence="1">Binds 3 Mg(2+) or Mn(2+) ions per subunit.</text>
</comment>
<comment type="cofactor">
    <cofactor evidence="1">
        <name>K(+)</name>
        <dbReference type="ChEBI" id="CHEBI:29103"/>
    </cofactor>
</comment>
<comment type="pathway">
    <text>Terpene metabolism; oleoresin biosynthesis.</text>
</comment>
<comment type="subcellular location">
    <subcellularLocation>
        <location evidence="1">Plastid</location>
        <location evidence="1">Chloroplast</location>
    </subcellularLocation>
</comment>
<comment type="domain">
    <text>The Asp-Asp-Xaa-Xaa-Asp/Glu (DDXXD/E) motif is important for the catalytic activity, presumably through binding to Mg(2+).</text>
</comment>
<comment type="miscellaneous">
    <text>The conserved 65-Arg-Arg-66 motif may play a role in the isomerization step of the terpenoid cyclization reaction sequence.</text>
</comment>
<comment type="similarity">
    <text evidence="6">Belongs to the terpene synthase family. Tpsd subfamily.</text>
</comment>
<reference key="1">
    <citation type="journal article" date="1999" name="Arch. Biochem. Biophys.">
        <title>cDNA cloning, characterization, and functional expression of four new monoterpene synthase members of the Tpsd gene family from grand fir (Abies grandis).</title>
        <authorList>
            <person name="Bohlmann J."/>
            <person name="Phillips M."/>
            <person name="Ramachandiran V."/>
            <person name="Katoh S."/>
            <person name="Croteau R.B."/>
        </authorList>
    </citation>
    <scope>NUCLEOTIDE SEQUENCE [MRNA]</scope>
    <scope>FUNCTION</scope>
    <scope>CATALYTIC ACTIVITY</scope>
    <source>
        <tissue>Stem</tissue>
    </source>
</reference>
<reference key="2">
    <citation type="journal article" date="1998" name="Proc. Natl. Acad. Sci. U.S.A.">
        <title>Plant terpenoid synthases: molecular biology and phylogenetic analysis.</title>
        <authorList>
            <person name="Bohlmann J."/>
            <person name="Meyer-Gauen G."/>
            <person name="Croteau R.B."/>
        </authorList>
    </citation>
    <scope>GENE FAMILY</scope>
    <scope>NOMENCLATURE</scope>
    <scope>FUNCTION</scope>
</reference>
<reference key="3">
    <citation type="journal article" date="2001" name="Genetics">
        <title>Genomic organization of plant terpene synthases and molecular evolutionary implications.</title>
        <authorList>
            <person name="Trapp S.C."/>
            <person name="Croteau R.B."/>
        </authorList>
    </citation>
    <scope>GENE FAMILY</scope>
    <scope>NOMENCLATURE</scope>
    <scope>FUNCTION</scope>
</reference>
<name>TPSD9_ABIGR</name>
<evidence type="ECO:0000250" key="1"/>
<evidence type="ECO:0000255" key="2"/>
<evidence type="ECO:0000269" key="3">
    <source>
    </source>
</evidence>
<evidence type="ECO:0000269" key="4">
    <source>
    </source>
</evidence>
<evidence type="ECO:0000269" key="5">
    <source>
    </source>
</evidence>
<evidence type="ECO:0000305" key="6"/>
<keyword id="KW-0150">Chloroplast</keyword>
<keyword id="KW-0456">Lyase</keyword>
<keyword id="KW-0460">Magnesium</keyword>
<keyword id="KW-0464">Manganese</keyword>
<keyword id="KW-0479">Metal-binding</keyword>
<keyword id="KW-0934">Plastid</keyword>
<keyword id="KW-0809">Transit peptide</keyword>